<gene>
    <name evidence="1" type="primary">gpmA</name>
    <name type="ordered locus">Blon_2152</name>
    <name type="ordered locus">BLIJ_2229</name>
</gene>
<evidence type="ECO:0000255" key="1">
    <source>
        <dbReference type="HAMAP-Rule" id="MF_01039"/>
    </source>
</evidence>
<name>GPMA_BIFLS</name>
<accession>B7GUR7</accession>
<accession>E8MN03</accession>
<organism>
    <name type="scientific">Bifidobacterium longum subsp. infantis (strain ATCC 15697 / DSM 20088 / JCM 1222 / NCTC 11817 / S12)</name>
    <dbReference type="NCBI Taxonomy" id="391904"/>
    <lineage>
        <taxon>Bacteria</taxon>
        <taxon>Bacillati</taxon>
        <taxon>Actinomycetota</taxon>
        <taxon>Actinomycetes</taxon>
        <taxon>Bifidobacteriales</taxon>
        <taxon>Bifidobacteriaceae</taxon>
        <taxon>Bifidobacterium</taxon>
    </lineage>
</organism>
<keyword id="KW-0312">Gluconeogenesis</keyword>
<keyword id="KW-0324">Glycolysis</keyword>
<keyword id="KW-0413">Isomerase</keyword>
<feature type="chain" id="PRO_1000149503" description="2,3-bisphosphoglycerate-dependent phosphoglycerate mutase">
    <location>
        <begin position="1"/>
        <end position="246"/>
    </location>
</feature>
<feature type="active site" description="Tele-phosphohistidine intermediate" evidence="1">
    <location>
        <position position="10"/>
    </location>
</feature>
<feature type="active site" description="Proton donor/acceptor" evidence="1">
    <location>
        <position position="88"/>
    </location>
</feature>
<feature type="binding site" evidence="1">
    <location>
        <begin position="9"/>
        <end position="16"/>
    </location>
    <ligand>
        <name>substrate</name>
    </ligand>
</feature>
<feature type="binding site" evidence="1">
    <location>
        <begin position="22"/>
        <end position="23"/>
    </location>
    <ligand>
        <name>substrate</name>
    </ligand>
</feature>
<feature type="binding site" evidence="1">
    <location>
        <position position="61"/>
    </location>
    <ligand>
        <name>substrate</name>
    </ligand>
</feature>
<feature type="binding site" evidence="1">
    <location>
        <begin position="88"/>
        <end position="91"/>
    </location>
    <ligand>
        <name>substrate</name>
    </ligand>
</feature>
<feature type="binding site" evidence="1">
    <location>
        <position position="99"/>
    </location>
    <ligand>
        <name>substrate</name>
    </ligand>
</feature>
<feature type="binding site" evidence="1">
    <location>
        <begin position="115"/>
        <end position="116"/>
    </location>
    <ligand>
        <name>substrate</name>
    </ligand>
</feature>
<feature type="binding site" evidence="1">
    <location>
        <begin position="181"/>
        <end position="182"/>
    </location>
    <ligand>
        <name>substrate</name>
    </ligand>
</feature>
<feature type="site" description="Transition state stabilizer" evidence="1">
    <location>
        <position position="180"/>
    </location>
</feature>
<sequence length="246" mass="27605">MTYKLVLLRHGQSAWNKTNQFTGWVDVPLTEQGEAEAKRGGELLKEKNVLPDIVFTSLLRRAINTANIALDAADRLWIPVQRDWRLNERHYGALQGKNKTEIREEYGDEKFMLWRRSYATPPPEIDPNDQYAQNNDPRYAGDPVPEAECLANVVERVKPYFESAIEPELKAGKTVLIAAHGNSLRAIVKMLDNLSEEEIAKVNIPTAIPLLYELDENFKPIKPRGEYLDPEAAAAGAAAVAAQGQK</sequence>
<proteinExistence type="inferred from homology"/>
<reference key="1">
    <citation type="journal article" date="2008" name="Proc. Natl. Acad. Sci. U.S.A.">
        <title>The genome sequence of Bifidobacterium longum subsp. infantis reveals adaptations for milk utilization within the infant microbiome.</title>
        <authorList>
            <person name="Sela D.A."/>
            <person name="Chapman J."/>
            <person name="Adeuya A."/>
            <person name="Kim J.H."/>
            <person name="Chen F."/>
            <person name="Whitehead T.R."/>
            <person name="Lapidus A."/>
            <person name="Rokhsar D.S."/>
            <person name="Lebrilla C.B."/>
            <person name="German J.B."/>
            <person name="Price N.P."/>
            <person name="Richardson P.M."/>
            <person name="Mills D.A."/>
        </authorList>
    </citation>
    <scope>NUCLEOTIDE SEQUENCE [LARGE SCALE GENOMIC DNA]</scope>
    <source>
        <strain>ATCC 15697 / DSM 20088 / JCM 1222 / NCTC 11817 / S12</strain>
    </source>
</reference>
<reference key="2">
    <citation type="journal article" date="2011" name="Nature">
        <title>Bifidobacteria can protect from enteropathogenic infection through production of acetate.</title>
        <authorList>
            <person name="Fukuda S."/>
            <person name="Toh H."/>
            <person name="Hase K."/>
            <person name="Oshima K."/>
            <person name="Nakanishi Y."/>
            <person name="Yoshimura K."/>
            <person name="Tobe T."/>
            <person name="Clarke J.M."/>
            <person name="Topping D.L."/>
            <person name="Suzuki T."/>
            <person name="Taylor T.D."/>
            <person name="Itoh K."/>
            <person name="Kikuchi J."/>
            <person name="Morita H."/>
            <person name="Hattori M."/>
            <person name="Ohno H."/>
        </authorList>
    </citation>
    <scope>NUCLEOTIDE SEQUENCE [LARGE SCALE GENOMIC DNA]</scope>
    <source>
        <strain>ATCC 15697 / DSM 20088 / JCM 1222 / NCTC 11817 / S12</strain>
    </source>
</reference>
<protein>
    <recommendedName>
        <fullName evidence="1">2,3-bisphosphoglycerate-dependent phosphoglycerate mutase</fullName>
        <shortName evidence="1">BPG-dependent PGAM</shortName>
        <shortName evidence="1">PGAM</shortName>
        <shortName evidence="1">Phosphoglyceromutase</shortName>
        <shortName evidence="1">dPGM</shortName>
        <ecNumber evidence="1">5.4.2.11</ecNumber>
    </recommendedName>
</protein>
<dbReference type="EC" id="5.4.2.11" evidence="1"/>
<dbReference type="EMBL" id="CP001095">
    <property type="protein sequence ID" value="ACJ53213.1"/>
    <property type="molecule type" value="Genomic_DNA"/>
</dbReference>
<dbReference type="EMBL" id="AP010889">
    <property type="protein sequence ID" value="BAJ69806.1"/>
    <property type="molecule type" value="Genomic_DNA"/>
</dbReference>
<dbReference type="RefSeq" id="WP_007052347.1">
    <property type="nucleotide sequence ID" value="NZ_JDTT01000015.1"/>
</dbReference>
<dbReference type="SMR" id="B7GUR7"/>
<dbReference type="KEGG" id="bln:Blon_2152"/>
<dbReference type="KEGG" id="blon:BLIJ_2229"/>
<dbReference type="PATRIC" id="fig|391904.8.peg.2231"/>
<dbReference type="HOGENOM" id="CLU_033323_1_1_11"/>
<dbReference type="UniPathway" id="UPA00109">
    <property type="reaction ID" value="UER00186"/>
</dbReference>
<dbReference type="Proteomes" id="UP000001360">
    <property type="component" value="Chromosome"/>
</dbReference>
<dbReference type="GO" id="GO:0004619">
    <property type="term" value="F:phosphoglycerate mutase activity"/>
    <property type="evidence" value="ECO:0007669"/>
    <property type="project" value="UniProtKB-EC"/>
</dbReference>
<dbReference type="GO" id="GO:0006094">
    <property type="term" value="P:gluconeogenesis"/>
    <property type="evidence" value="ECO:0007669"/>
    <property type="project" value="UniProtKB-UniRule"/>
</dbReference>
<dbReference type="GO" id="GO:0006096">
    <property type="term" value="P:glycolytic process"/>
    <property type="evidence" value="ECO:0007669"/>
    <property type="project" value="UniProtKB-UniRule"/>
</dbReference>
<dbReference type="CDD" id="cd07067">
    <property type="entry name" value="HP_PGM_like"/>
    <property type="match status" value="1"/>
</dbReference>
<dbReference type="FunFam" id="3.40.50.1240:FF:000003">
    <property type="entry name" value="2,3-bisphosphoglycerate-dependent phosphoglycerate mutase"/>
    <property type="match status" value="1"/>
</dbReference>
<dbReference type="Gene3D" id="3.40.50.1240">
    <property type="entry name" value="Phosphoglycerate mutase-like"/>
    <property type="match status" value="1"/>
</dbReference>
<dbReference type="HAMAP" id="MF_01039">
    <property type="entry name" value="PGAM_GpmA"/>
    <property type="match status" value="1"/>
</dbReference>
<dbReference type="InterPro" id="IPR013078">
    <property type="entry name" value="His_Pase_superF_clade-1"/>
</dbReference>
<dbReference type="InterPro" id="IPR029033">
    <property type="entry name" value="His_PPase_superfam"/>
</dbReference>
<dbReference type="InterPro" id="IPR001345">
    <property type="entry name" value="PG/BPGM_mutase_AS"/>
</dbReference>
<dbReference type="InterPro" id="IPR005952">
    <property type="entry name" value="Phosphogly_mut1"/>
</dbReference>
<dbReference type="NCBIfam" id="TIGR01258">
    <property type="entry name" value="pgm_1"/>
    <property type="match status" value="1"/>
</dbReference>
<dbReference type="NCBIfam" id="NF010713">
    <property type="entry name" value="PRK14115.1"/>
    <property type="match status" value="1"/>
</dbReference>
<dbReference type="NCBIfam" id="NF010718">
    <property type="entry name" value="PRK14120.1"/>
    <property type="match status" value="1"/>
</dbReference>
<dbReference type="PANTHER" id="PTHR11931">
    <property type="entry name" value="PHOSPHOGLYCERATE MUTASE"/>
    <property type="match status" value="1"/>
</dbReference>
<dbReference type="Pfam" id="PF00300">
    <property type="entry name" value="His_Phos_1"/>
    <property type="match status" value="2"/>
</dbReference>
<dbReference type="PIRSF" id="PIRSF000709">
    <property type="entry name" value="6PFK_2-Ptase"/>
    <property type="match status" value="1"/>
</dbReference>
<dbReference type="SMART" id="SM00855">
    <property type="entry name" value="PGAM"/>
    <property type="match status" value="1"/>
</dbReference>
<dbReference type="SUPFAM" id="SSF53254">
    <property type="entry name" value="Phosphoglycerate mutase-like"/>
    <property type="match status" value="1"/>
</dbReference>
<dbReference type="PROSITE" id="PS00175">
    <property type="entry name" value="PG_MUTASE"/>
    <property type="match status" value="1"/>
</dbReference>
<comment type="function">
    <text evidence="1">Catalyzes the interconversion of 2-phosphoglycerate and 3-phosphoglycerate.</text>
</comment>
<comment type="catalytic activity">
    <reaction evidence="1">
        <text>(2R)-2-phosphoglycerate = (2R)-3-phosphoglycerate</text>
        <dbReference type="Rhea" id="RHEA:15901"/>
        <dbReference type="ChEBI" id="CHEBI:58272"/>
        <dbReference type="ChEBI" id="CHEBI:58289"/>
        <dbReference type="EC" id="5.4.2.11"/>
    </reaction>
</comment>
<comment type="pathway">
    <text evidence="1">Carbohydrate degradation; glycolysis; pyruvate from D-glyceraldehyde 3-phosphate: step 3/5.</text>
</comment>
<comment type="similarity">
    <text evidence="1">Belongs to the phosphoglycerate mutase family. BPG-dependent PGAM subfamily.</text>
</comment>